<name>ACBP_YEAST</name>
<sequence length="87" mass="10061">MVSQLFEEKAKAVNELPTKPSTDELLELYALYKQATVGDNDKEKPGIFNMKDRYKWEAWENLKGKSQEDAEKEYIALVDQLIAKYSS</sequence>
<reference key="1">
    <citation type="journal article" date="1992" name="Proc. Natl. Acad. Sci. U.S.A.">
        <title>Molecular cloning of the gene for the yeast homolog (ACB) of diazepam binding inhibitor/endozepine/acyl-CoA-binding protein.</title>
        <authorList>
            <person name="Rose T.M."/>
            <person name="Schultz E.R."/>
            <person name="Todaro G.J."/>
        </authorList>
    </citation>
    <scope>NUCLEOTIDE SEQUENCE [GENOMIC DNA]</scope>
</reference>
<reference key="2">
    <citation type="journal article" date="1997" name="Yeast">
        <title>Saccharomyces carlsbergensis contains two functional genes encoding the acyl-CoA binding protein, one similar to the ACB1 gene from S. cerevisiae and one identical to the ACB1 gene from S. monacensis.</title>
        <authorList>
            <person name="Borsting C."/>
            <person name="Hummel R."/>
            <person name="Schultz E.R."/>
            <person name="Rose T.M."/>
            <person name="Pedersen M.B."/>
            <person name="Knudsen J."/>
            <person name="Kristiansen K."/>
        </authorList>
    </citation>
    <scope>NUCLEOTIDE SEQUENCE [GENOMIC DNA]</scope>
    <source>
        <strain>ATCC 26109 / X2180</strain>
    </source>
</reference>
<reference key="3">
    <citation type="journal article" date="2005" name="Nat. Genet.">
        <title>Quantitative trait loci mapped to single-nucleotide resolution in yeast.</title>
        <authorList>
            <person name="Deutschbauer A.M."/>
            <person name="Davis R.W."/>
        </authorList>
    </citation>
    <scope>NUCLEOTIDE SEQUENCE [GENOMIC DNA]</scope>
    <source>
        <strain>SK1</strain>
    </source>
</reference>
<reference key="4">
    <citation type="journal article" date="1997" name="Yeast">
        <title>Sequence analysis of 203 kilobases from Saccharomyces cerevisiae chromosome VII.</title>
        <authorList>
            <person name="Rieger M."/>
            <person name="Brueckner M."/>
            <person name="Schaefer M."/>
            <person name="Mueller-Auer S."/>
        </authorList>
    </citation>
    <scope>NUCLEOTIDE SEQUENCE [GENOMIC DNA]</scope>
    <source>
        <strain>ATCC 204508 / S288c</strain>
    </source>
</reference>
<reference key="5">
    <citation type="journal article" date="1997" name="Nature">
        <title>The nucleotide sequence of Saccharomyces cerevisiae chromosome VII.</title>
        <authorList>
            <person name="Tettelin H."/>
            <person name="Agostoni-Carbone M.L."/>
            <person name="Albermann K."/>
            <person name="Albers M."/>
            <person name="Arroyo J."/>
            <person name="Backes U."/>
            <person name="Barreiros T."/>
            <person name="Bertani I."/>
            <person name="Bjourson A.J."/>
            <person name="Brueckner M."/>
            <person name="Bruschi C.V."/>
            <person name="Carignani G."/>
            <person name="Castagnoli L."/>
            <person name="Cerdan E."/>
            <person name="Clemente M.L."/>
            <person name="Coblenz A."/>
            <person name="Coglievina M."/>
            <person name="Coissac E."/>
            <person name="Defoor E."/>
            <person name="Del Bino S."/>
            <person name="Delius H."/>
            <person name="Delneri D."/>
            <person name="de Wergifosse P."/>
            <person name="Dujon B."/>
            <person name="Durand P."/>
            <person name="Entian K.-D."/>
            <person name="Eraso P."/>
            <person name="Escribano V."/>
            <person name="Fabiani L."/>
            <person name="Fartmann B."/>
            <person name="Feroli F."/>
            <person name="Feuermann M."/>
            <person name="Frontali L."/>
            <person name="Garcia-Gonzalez M."/>
            <person name="Garcia-Saez M.I."/>
            <person name="Goffeau A."/>
            <person name="Guerreiro P."/>
            <person name="Hani J."/>
            <person name="Hansen M."/>
            <person name="Hebling U."/>
            <person name="Hernandez K."/>
            <person name="Heumann K."/>
            <person name="Hilger F."/>
            <person name="Hofmann B."/>
            <person name="Indge K.J."/>
            <person name="James C.M."/>
            <person name="Klima R."/>
            <person name="Koetter P."/>
            <person name="Kramer B."/>
            <person name="Kramer W."/>
            <person name="Lauquin G."/>
            <person name="Leuther H."/>
            <person name="Louis E.J."/>
            <person name="Maillier E."/>
            <person name="Marconi A."/>
            <person name="Martegani E."/>
            <person name="Mazon M.J."/>
            <person name="Mazzoni C."/>
            <person name="McReynolds A.D.K."/>
            <person name="Melchioretto P."/>
            <person name="Mewes H.-W."/>
            <person name="Minenkova O."/>
            <person name="Mueller-Auer S."/>
            <person name="Nawrocki A."/>
            <person name="Netter P."/>
            <person name="Neu R."/>
            <person name="Nombela C."/>
            <person name="Oliver S.G."/>
            <person name="Panzeri L."/>
            <person name="Paoluzi S."/>
            <person name="Plevani P."/>
            <person name="Portetelle D."/>
            <person name="Portillo F."/>
            <person name="Potier S."/>
            <person name="Purnelle B."/>
            <person name="Rieger M."/>
            <person name="Riles L."/>
            <person name="Rinaldi T."/>
            <person name="Robben J."/>
            <person name="Rodrigues-Pousada C."/>
            <person name="Rodriguez-Belmonte E."/>
            <person name="Rodriguez-Torres A.M."/>
            <person name="Rose M."/>
            <person name="Ruzzi M."/>
            <person name="Saliola M."/>
            <person name="Sanchez-Perez M."/>
            <person name="Schaefer B."/>
            <person name="Schaefer M."/>
            <person name="Scharfe M."/>
            <person name="Schmidheini T."/>
            <person name="Schreer A."/>
            <person name="Skala J."/>
            <person name="Souciet J.-L."/>
            <person name="Steensma H.Y."/>
            <person name="Talla E."/>
            <person name="Thierry A."/>
            <person name="Vandenbol M."/>
            <person name="van der Aart Q.J.M."/>
            <person name="Van Dyck L."/>
            <person name="Vanoni M."/>
            <person name="Verhasselt P."/>
            <person name="Voet M."/>
            <person name="Volckaert G."/>
            <person name="Wambutt R."/>
            <person name="Watson M.D."/>
            <person name="Weber N."/>
            <person name="Wedler E."/>
            <person name="Wedler H."/>
            <person name="Wipfli P."/>
            <person name="Wolf K."/>
            <person name="Wright L.F."/>
            <person name="Zaccaria P."/>
            <person name="Zimmermann M."/>
            <person name="Zollner A."/>
            <person name="Kleine K."/>
        </authorList>
    </citation>
    <scope>NUCLEOTIDE SEQUENCE [LARGE SCALE GENOMIC DNA]</scope>
    <source>
        <strain>ATCC 204508 / S288c</strain>
    </source>
</reference>
<reference key="6">
    <citation type="journal article" date="2014" name="G3 (Bethesda)">
        <title>The reference genome sequence of Saccharomyces cerevisiae: Then and now.</title>
        <authorList>
            <person name="Engel S.R."/>
            <person name="Dietrich F.S."/>
            <person name="Fisk D.G."/>
            <person name="Binkley G."/>
            <person name="Balakrishnan R."/>
            <person name="Costanzo M.C."/>
            <person name="Dwight S.S."/>
            <person name="Hitz B.C."/>
            <person name="Karra K."/>
            <person name="Nash R.S."/>
            <person name="Weng S."/>
            <person name="Wong E.D."/>
            <person name="Lloyd P."/>
            <person name="Skrzypek M.S."/>
            <person name="Miyasato S.R."/>
            <person name="Simison M."/>
            <person name="Cherry J.M."/>
        </authorList>
    </citation>
    <scope>GENOME REANNOTATION</scope>
    <source>
        <strain>ATCC 204508 / S288c</strain>
    </source>
</reference>
<reference key="7">
    <citation type="journal article" date="2003" name="Nature">
        <title>Global analysis of protein expression in yeast.</title>
        <authorList>
            <person name="Ghaemmaghami S."/>
            <person name="Huh W.-K."/>
            <person name="Bower K."/>
            <person name="Howson R.W."/>
            <person name="Belle A."/>
            <person name="Dephoure N."/>
            <person name="O'Shea E.K."/>
            <person name="Weissman J.S."/>
        </authorList>
    </citation>
    <scope>LEVEL OF PROTEIN EXPRESSION [LARGE SCALE ANALYSIS]</scope>
</reference>
<reference key="8">
    <citation type="journal article" date="2012" name="Proteomics">
        <title>Sites of ubiquitin attachment in Saccharomyces cerevisiae.</title>
        <authorList>
            <person name="Starita L.M."/>
            <person name="Lo R.S."/>
            <person name="Eng J.K."/>
            <person name="von Haller P.D."/>
            <person name="Fields S."/>
        </authorList>
    </citation>
    <scope>UBIQUITINATION [LARGE SCALE ANALYSIS] AT LYS-51 AND LYS-72</scope>
    <scope>IDENTIFICATION BY MASS SPECTROMETRY [LARGE SCALE ANALYSIS]</scope>
</reference>
<reference evidence="5" key="9">
    <citation type="journal article" date="2024" name="Nat. Struct. Mol. Biol.">
        <title>Structure of the yeast ceramide synthase.</title>
        <authorList>
            <person name="Schafer J.H."/>
            <person name="Clausmeyer L."/>
            <person name="Korner C."/>
            <person name="Esch B.M."/>
            <person name="Wolf V.N."/>
            <person name="Sapia J."/>
            <person name="Ahmed Y."/>
            <person name="Walter S."/>
            <person name="Vanni S."/>
            <person name="Januliene D."/>
            <person name="Moeller A."/>
            <person name="Frohlich F."/>
        </authorList>
    </citation>
    <scope>FUNCTION</scope>
</reference>
<reference key="10">
    <citation type="journal article" date="2005" name="Proteins">
        <title>Different secondary structure elements as scaffolds for protein folding transition states of two homologous four-helix bundles.</title>
        <authorList>
            <person name="Teilum K."/>
            <person name="Thormann T."/>
            <person name="Caterer N.R."/>
            <person name="Poulsen H.I."/>
            <person name="Jensen P.H."/>
            <person name="Knudsen J."/>
            <person name="Kragelund B.B."/>
            <person name="Poulsen F.M."/>
        </authorList>
    </citation>
    <scope>STRUCTURE BY NMR</scope>
</reference>
<evidence type="ECO:0000250" key="1"/>
<evidence type="ECO:0000255" key="2">
    <source>
        <dbReference type="PROSITE-ProRule" id="PRU00573"/>
    </source>
</evidence>
<evidence type="ECO:0000269" key="3">
    <source>
    </source>
</evidence>
<evidence type="ECO:0000269" key="4">
    <source>
    </source>
</evidence>
<evidence type="ECO:0000305" key="5"/>
<evidence type="ECO:0007744" key="6">
    <source>
    </source>
</evidence>
<evidence type="ECO:0007829" key="7">
    <source>
        <dbReference type="PDB" id="1ST7"/>
    </source>
</evidence>
<comment type="function">
    <text evidence="4">Binds medium- and long-chain acyl-CoA esters with very high affinity and may function as an intracellular carrier of acyl-CoA esters. Enhances the in vitro activity of the ceramide synthase complex (PubMed:39528796).</text>
</comment>
<comment type="miscellaneous">
    <text evidence="3">Present with 8500 molecules/cell in log phase SD medium.</text>
</comment>
<comment type="similarity">
    <text evidence="5">Belongs to the ACBP family.</text>
</comment>
<keyword id="KW-0002">3D-structure</keyword>
<keyword id="KW-1017">Isopeptide bond</keyword>
<keyword id="KW-0446">Lipid-binding</keyword>
<keyword id="KW-1185">Reference proteome</keyword>
<keyword id="KW-0813">Transport</keyword>
<keyword id="KW-0832">Ubl conjugation</keyword>
<gene>
    <name type="primary">ACB1</name>
    <name type="synonym">ACB</name>
    <name type="ordered locus">YGR037C</name>
</gene>
<dbReference type="EMBL" id="M99489">
    <property type="protein sequence ID" value="AAA34384.1"/>
    <property type="molecule type" value="Genomic_DNA"/>
</dbReference>
<dbReference type="EMBL" id="Y08687">
    <property type="protein sequence ID" value="CAA69944.1"/>
    <property type="molecule type" value="Genomic_DNA"/>
</dbReference>
<dbReference type="EMBL" id="Y08689">
    <property type="protein sequence ID" value="CAA69947.1"/>
    <property type="molecule type" value="Genomic_DNA"/>
</dbReference>
<dbReference type="EMBL" id="DQ115390">
    <property type="protein sequence ID" value="AAZ22453.1"/>
    <property type="molecule type" value="Genomic_DNA"/>
</dbReference>
<dbReference type="EMBL" id="Z72822">
    <property type="protein sequence ID" value="CAA97025.1"/>
    <property type="molecule type" value="Genomic_DNA"/>
</dbReference>
<dbReference type="EMBL" id="BK006941">
    <property type="protein sequence ID" value="DAA08135.1"/>
    <property type="molecule type" value="Genomic_DNA"/>
</dbReference>
<dbReference type="PIR" id="S31247">
    <property type="entry name" value="S31247"/>
</dbReference>
<dbReference type="RefSeq" id="NP_011551.3">
    <property type="nucleotide sequence ID" value="NM_001181166.3"/>
</dbReference>
<dbReference type="PDB" id="1ST7">
    <property type="method" value="NMR"/>
    <property type="chains" value="A=2-87"/>
</dbReference>
<dbReference type="PDBsum" id="1ST7"/>
<dbReference type="BMRB" id="P31787"/>
<dbReference type="SMR" id="P31787"/>
<dbReference type="BioGRID" id="33282">
    <property type="interactions" value="170"/>
</dbReference>
<dbReference type="FunCoup" id="P31787">
    <property type="interactions" value="536"/>
</dbReference>
<dbReference type="IntAct" id="P31787">
    <property type="interactions" value="18"/>
</dbReference>
<dbReference type="MINT" id="P31787"/>
<dbReference type="STRING" id="4932.YGR037C"/>
<dbReference type="iPTMnet" id="P31787"/>
<dbReference type="PaxDb" id="4932-YGR037C"/>
<dbReference type="PeptideAtlas" id="P31787"/>
<dbReference type="EnsemblFungi" id="YGR037C_mRNA">
    <property type="protein sequence ID" value="YGR037C"/>
    <property type="gene ID" value="YGR037C"/>
</dbReference>
<dbReference type="GeneID" id="852925"/>
<dbReference type="KEGG" id="sce:YGR037C"/>
<dbReference type="AGR" id="SGD:S000003269"/>
<dbReference type="SGD" id="S000003269">
    <property type="gene designation" value="ACB1"/>
</dbReference>
<dbReference type="VEuPathDB" id="FungiDB:YGR037C"/>
<dbReference type="eggNOG" id="KOG0817">
    <property type="taxonomic scope" value="Eukaryota"/>
</dbReference>
<dbReference type="GeneTree" id="ENSGT00940000173845"/>
<dbReference type="HOGENOM" id="CLU_118853_4_1_1"/>
<dbReference type="InParanoid" id="P31787"/>
<dbReference type="OMA" id="RYKFEAW"/>
<dbReference type="OrthoDB" id="346910at2759"/>
<dbReference type="BioCyc" id="YEAST:G3O-30758-MONOMER"/>
<dbReference type="Reactome" id="R-SCE-77289">
    <property type="pathway name" value="Mitochondrial Fatty Acid Beta-Oxidation"/>
</dbReference>
<dbReference type="BioGRID-ORCS" id="852925">
    <property type="hits" value="0 hits in 10 CRISPR screens"/>
</dbReference>
<dbReference type="EvolutionaryTrace" id="P31787"/>
<dbReference type="PRO" id="PR:P31787"/>
<dbReference type="Proteomes" id="UP000002311">
    <property type="component" value="Chromosome VII"/>
</dbReference>
<dbReference type="RNAct" id="P31787">
    <property type="molecule type" value="protein"/>
</dbReference>
<dbReference type="GO" id="GO:0005737">
    <property type="term" value="C:cytoplasm"/>
    <property type="evidence" value="ECO:0007005"/>
    <property type="project" value="SGD"/>
</dbReference>
<dbReference type="GO" id="GO:0005829">
    <property type="term" value="C:cytosol"/>
    <property type="evidence" value="ECO:0007005"/>
    <property type="project" value="SGD"/>
</dbReference>
<dbReference type="GO" id="GO:0005576">
    <property type="term" value="C:extracellular region"/>
    <property type="evidence" value="ECO:0000314"/>
    <property type="project" value="SGD"/>
</dbReference>
<dbReference type="GO" id="GO:0005634">
    <property type="term" value="C:nucleus"/>
    <property type="evidence" value="ECO:0007005"/>
    <property type="project" value="SGD"/>
</dbReference>
<dbReference type="GO" id="GO:0036042">
    <property type="term" value="F:long-chain fatty acyl-CoA binding"/>
    <property type="evidence" value="ECO:0000315"/>
    <property type="project" value="SGD"/>
</dbReference>
<dbReference type="GO" id="GO:0006631">
    <property type="term" value="P:fatty acid metabolic process"/>
    <property type="evidence" value="ECO:0000318"/>
    <property type="project" value="GO_Central"/>
</dbReference>
<dbReference type="GO" id="GO:0042761">
    <property type="term" value="P:very long-chain fatty acid biosynthetic process"/>
    <property type="evidence" value="ECO:0000315"/>
    <property type="project" value="SGD"/>
</dbReference>
<dbReference type="CDD" id="cd00435">
    <property type="entry name" value="ACBP"/>
    <property type="match status" value="1"/>
</dbReference>
<dbReference type="FunFam" id="1.20.80.10:FF:000010">
    <property type="entry name" value="Acyl-CoA-binding domain-containing protein 5"/>
    <property type="match status" value="1"/>
</dbReference>
<dbReference type="Gene3D" id="1.20.80.10">
    <property type="match status" value="1"/>
</dbReference>
<dbReference type="InterPro" id="IPR022408">
    <property type="entry name" value="Acyl-CoA-binding_prot_CS"/>
</dbReference>
<dbReference type="InterPro" id="IPR000582">
    <property type="entry name" value="Acyl-CoA-binding_protein"/>
</dbReference>
<dbReference type="InterPro" id="IPR035984">
    <property type="entry name" value="Acyl-CoA-binding_sf"/>
</dbReference>
<dbReference type="InterPro" id="IPR014352">
    <property type="entry name" value="FERM/acyl-CoA-bd_prot_sf"/>
</dbReference>
<dbReference type="PANTHER" id="PTHR23310:SF62">
    <property type="entry name" value="ACYL-COA BINDING PROTEIN 1, ISOFORM A"/>
    <property type="match status" value="1"/>
</dbReference>
<dbReference type="PANTHER" id="PTHR23310">
    <property type="entry name" value="ACYL-COA-BINDING PROTEIN, ACBP"/>
    <property type="match status" value="1"/>
</dbReference>
<dbReference type="Pfam" id="PF00887">
    <property type="entry name" value="ACBP"/>
    <property type="match status" value="1"/>
</dbReference>
<dbReference type="PRINTS" id="PR00689">
    <property type="entry name" value="ACOABINDINGP"/>
</dbReference>
<dbReference type="SUPFAM" id="SSF47027">
    <property type="entry name" value="Acyl-CoA binding protein"/>
    <property type="match status" value="1"/>
</dbReference>
<dbReference type="PROSITE" id="PS00880">
    <property type="entry name" value="ACB_1"/>
    <property type="match status" value="1"/>
</dbReference>
<dbReference type="PROSITE" id="PS51228">
    <property type="entry name" value="ACB_2"/>
    <property type="match status" value="1"/>
</dbReference>
<protein>
    <recommendedName>
        <fullName>Acyl-CoA-binding protein</fullName>
        <shortName>ACBP</shortName>
    </recommendedName>
</protein>
<accession>P31787</accession>
<accession>D6VUH4</accession>
<accession>Q45U46</accession>
<proteinExistence type="evidence at protein level"/>
<feature type="chain" id="PRO_0000214013" description="Acyl-CoA-binding protein">
    <location>
        <begin position="1"/>
        <end position="87"/>
    </location>
</feature>
<feature type="domain" description="ACB" evidence="2">
    <location>
        <begin position="2"/>
        <end position="87"/>
    </location>
</feature>
<feature type="binding site" evidence="1">
    <location>
        <begin position="29"/>
        <end position="33"/>
    </location>
    <ligand>
        <name>an acyl-CoA</name>
        <dbReference type="ChEBI" id="CHEBI:58342"/>
    </ligand>
</feature>
<feature type="binding site" evidence="1">
    <location>
        <position position="51"/>
    </location>
    <ligand>
        <name>an acyl-CoA</name>
        <dbReference type="ChEBI" id="CHEBI:58342"/>
    </ligand>
</feature>
<feature type="binding site" evidence="1">
    <location>
        <position position="55"/>
    </location>
    <ligand>
        <name>an acyl-CoA</name>
        <dbReference type="ChEBI" id="CHEBI:58342"/>
    </ligand>
</feature>
<feature type="binding site" evidence="1">
    <location>
        <position position="74"/>
    </location>
    <ligand>
        <name>an acyl-CoA</name>
        <dbReference type="ChEBI" id="CHEBI:58342"/>
    </ligand>
</feature>
<feature type="cross-link" description="Glycyl lysine isopeptide (Lys-Gly) (interchain with G-Cter in ubiquitin)" evidence="6">
    <location>
        <position position="51"/>
    </location>
</feature>
<feature type="cross-link" description="Glycyl lysine isopeptide (Lys-Gly) (interchain with G-Cter in ubiquitin)" evidence="6">
    <location>
        <position position="72"/>
    </location>
</feature>
<feature type="helix" evidence="7">
    <location>
        <begin position="3"/>
        <end position="13"/>
    </location>
</feature>
<feature type="helix" evidence="7">
    <location>
        <begin position="22"/>
        <end position="37"/>
    </location>
</feature>
<feature type="helix" evidence="7">
    <location>
        <begin position="50"/>
        <end position="60"/>
    </location>
</feature>
<feature type="turn" evidence="7">
    <location>
        <begin position="61"/>
        <end position="65"/>
    </location>
</feature>
<feature type="helix" evidence="7">
    <location>
        <begin position="66"/>
        <end position="85"/>
    </location>
</feature>
<organism>
    <name type="scientific">Saccharomyces cerevisiae (strain ATCC 204508 / S288c)</name>
    <name type="common">Baker's yeast</name>
    <dbReference type="NCBI Taxonomy" id="559292"/>
    <lineage>
        <taxon>Eukaryota</taxon>
        <taxon>Fungi</taxon>
        <taxon>Dikarya</taxon>
        <taxon>Ascomycota</taxon>
        <taxon>Saccharomycotina</taxon>
        <taxon>Saccharomycetes</taxon>
        <taxon>Saccharomycetales</taxon>
        <taxon>Saccharomycetaceae</taxon>
        <taxon>Saccharomyces</taxon>
    </lineage>
</organism>